<keyword id="KW-0325">Glycoprotein</keyword>
<keyword id="KW-0406">Ion transport</keyword>
<keyword id="KW-0408">Iron</keyword>
<keyword id="KW-0410">Iron transport</keyword>
<keyword id="KW-0479">Metal-binding</keyword>
<keyword id="KW-1185">Reference proteome</keyword>
<keyword id="KW-0677">Repeat</keyword>
<keyword id="KW-0964">Secreted</keyword>
<keyword id="KW-0732">Signal</keyword>
<keyword id="KW-0758">Storage protein</keyword>
<keyword id="KW-0813">Transport</keyword>
<accession>P19615</accession>
<accession>Q8T3T2</accession>
<sequence>MRAAILFCLVASSMAVPSGSLGSRPGTCPPQPSDQVMIEATRCSYVYGLTWDWNCNSQGQENYKCCQYENDIRICVPPIPADVDEEVGVEQPSQSVDQVRQAIQKTQDFIRKVGLYPAPDQRRRTTPTPDTVRWCVSSRCQMTKCQRMVSEFTYSPNMVPRKQWKCTQATSQEQCMFWIEQGWADIMTTREGQVYSANTTFNLKPIAYETTINDQQPEIQILKHYQNVTFALKSSRLVNPNTFSELRDKTTCHAGIDMPDFDMPASFADPVCNLIKEGVIPVTGNYIESFSDFVQESCVPGVLNMTYNKNGTYPLSLVTLCEDQQYKYSGIKGALSCLESGKGQVTFVDQKVIKKIMSDPNVRDNFQVVCRDESRPLDEEIFTDVTCHVGHTARPTIFINKNNTQQKETDIKTLVVKMMELYGNTDRDVNFNIFDSSVYDCGKCQMTGKPLNKNLIFLEESNTMKIVDDSKVYAGEVYAAYNVCSKLVPKPRAKICVTNVTEYEACRRFKGIAENIPEVKKVAWGCVLANSSIECMQAVHNNTADLFKANPMETFIAGKEFLLDPLMSVHRNDSVTMNHTYTRTLAVIKRSSLAKFPGLLSVPEGQPKYIKDLWKLKICSAGLKNFSAFHSPIGYLLANGTIPRIGSVFESVNRYFQATCVPEIEPETWRLDSDLLLGREMNWGFSSLNMYNFTGQEWLLWNTPATWNFLTYNRKVSTGLDIKKLIELKKQNLTSHIFNQNLSSPRNVELLDDLVGVEGISDLVKGVQDTIGPEGKQKMNMLRDRLSNSFPNFEAVRTLSDKVDIVNKMKDARQQRLQNKDHPFGNVIQETFQGHLMVDVFSKLLELRSDKISTLEEIISHVKTIPYLTDFKDVEITTVLKHPAIMSYVEIYFPRLSQTFVEPFDNVELREREFNRYTNPLWLSPKVHTYLDLVKNHQTEITKTCNSNLPLNFKGYEGALRCLKSGVADLASSTSRPSVTRTLRDTDLSTGWVHLQRPPPSLPQRQVVEIDVNMDIAKVCNFGEVMNPVLVTAYNTSGSWRWNITKALMIAHQSVALPALFGEGTVMGKDYDMLLPIAPLNQSYQPFLGSKPLRSMEAIVKASSYDWFKDQTGICYGETYTNIVKQRNETCQAIVKDVTCVGTPRMKKISVGRFGAKQFKMIKMCSRPSKFVRKMADFQCDNGFGYLKPVITAVACECMLCEEMIEYNTSFTEDNMWSDVSNKYVLTGEQDIYRQIPIWGNNSYFYDHTLNKNFELGNHSIIVEHVQTVVVERPSPGILSQVNSEVDPEVQVQMDSASLTKTCETVWNGQSWLPERFQGYKTSGSCVVPETGANAKSRVDRFRQIMQRKQQLVDHHH</sequence>
<name>MYP_STRPU</name>
<organism>
    <name type="scientific">Strongylocentrotus purpuratus</name>
    <name type="common">Purple sea urchin</name>
    <dbReference type="NCBI Taxonomy" id="7668"/>
    <lineage>
        <taxon>Eukaryota</taxon>
        <taxon>Metazoa</taxon>
        <taxon>Echinodermata</taxon>
        <taxon>Eleutherozoa</taxon>
        <taxon>Echinozoa</taxon>
        <taxon>Echinoidea</taxon>
        <taxon>Euechinoidea</taxon>
        <taxon>Echinacea</taxon>
        <taxon>Camarodonta</taxon>
        <taxon>Echinidea</taxon>
        <taxon>Strongylocentrotidae</taxon>
        <taxon>Strongylocentrotus</taxon>
    </lineage>
</organism>
<evidence type="ECO:0000255" key="1"/>
<evidence type="ECO:0000255" key="2">
    <source>
        <dbReference type="PROSITE-ProRule" id="PRU00741"/>
    </source>
</evidence>
<evidence type="ECO:0000269" key="3">
    <source>
    </source>
</evidence>
<evidence type="ECO:0000305" key="4"/>
<proteinExistence type="evidence at protein level"/>
<dbReference type="EMBL" id="AY090112">
    <property type="protein sequence ID" value="AAM14717.1"/>
    <property type="molecule type" value="mRNA"/>
</dbReference>
<dbReference type="EMBL" id="Y00513">
    <property type="protein sequence ID" value="CAA68565.1"/>
    <property type="status" value="ALT_FRAME"/>
    <property type="molecule type" value="Genomic_DNA"/>
</dbReference>
<dbReference type="PIR" id="S00696">
    <property type="entry name" value="S00696"/>
</dbReference>
<dbReference type="RefSeq" id="NP_999740.1">
    <property type="nucleotide sequence ID" value="NM_214575.1"/>
</dbReference>
<dbReference type="Allergome" id="8814">
    <property type="allergen name" value="Str pu Vitellogenin"/>
</dbReference>
<dbReference type="EnsemblMetazoa" id="NM_214575">
    <property type="protein sequence ID" value="NP_999740"/>
    <property type="gene ID" value="GeneID_373376"/>
</dbReference>
<dbReference type="GeneID" id="373376"/>
<dbReference type="KEGG" id="spu:373376"/>
<dbReference type="CTD" id="446200"/>
<dbReference type="eggNOG" id="ENOG502QRSZ">
    <property type="taxonomic scope" value="Eukaryota"/>
</dbReference>
<dbReference type="HOGENOM" id="CLU_257895_0_0_1"/>
<dbReference type="InParanoid" id="P19615"/>
<dbReference type="OMA" id="RKEWACA"/>
<dbReference type="OrthoDB" id="9981115at2759"/>
<dbReference type="PhylomeDB" id="P19615"/>
<dbReference type="Proteomes" id="UP000007110">
    <property type="component" value="Unassembled WGS sequence"/>
</dbReference>
<dbReference type="GO" id="GO:0005576">
    <property type="term" value="C:extracellular region"/>
    <property type="evidence" value="ECO:0007669"/>
    <property type="project" value="UniProtKB-SubCell"/>
</dbReference>
<dbReference type="GO" id="GO:0005785">
    <property type="term" value="C:signal recognition particle receptor complex"/>
    <property type="evidence" value="ECO:0000318"/>
    <property type="project" value="GO_Central"/>
</dbReference>
<dbReference type="GO" id="GO:0046872">
    <property type="term" value="F:metal ion binding"/>
    <property type="evidence" value="ECO:0007669"/>
    <property type="project" value="UniProtKB-KW"/>
</dbReference>
<dbReference type="GO" id="GO:0045735">
    <property type="term" value="F:nutrient reservoir activity"/>
    <property type="evidence" value="ECO:0007669"/>
    <property type="project" value="UniProtKB-KW"/>
</dbReference>
<dbReference type="GO" id="GO:0006826">
    <property type="term" value="P:iron ion transport"/>
    <property type="evidence" value="ECO:0007669"/>
    <property type="project" value="UniProtKB-KW"/>
</dbReference>
<dbReference type="GO" id="GO:0045047">
    <property type="term" value="P:protein targeting to ER"/>
    <property type="evidence" value="ECO:0000318"/>
    <property type="project" value="GO_Central"/>
</dbReference>
<dbReference type="CDD" id="cd13529">
    <property type="entry name" value="PBP2_transferrin"/>
    <property type="match status" value="2"/>
</dbReference>
<dbReference type="Gene3D" id="3.40.190.10">
    <property type="entry name" value="Periplasmic binding protein-like II"/>
    <property type="match status" value="3"/>
</dbReference>
<dbReference type="InterPro" id="IPR001156">
    <property type="entry name" value="Transferrin-like_dom"/>
</dbReference>
<dbReference type="InterPro" id="IPR018195">
    <property type="entry name" value="Transferrin_Fe_BS"/>
</dbReference>
<dbReference type="PANTHER" id="PTHR11485:SF34">
    <property type="entry name" value="SIGNAL RECOGNITION PARTICLE RECEPTOR SUBUNIT BETA"/>
    <property type="match status" value="1"/>
</dbReference>
<dbReference type="PANTHER" id="PTHR11485">
    <property type="entry name" value="TRANSFERRIN"/>
    <property type="match status" value="1"/>
</dbReference>
<dbReference type="Pfam" id="PF00405">
    <property type="entry name" value="Transferrin"/>
    <property type="match status" value="2"/>
</dbReference>
<dbReference type="PRINTS" id="PR00422">
    <property type="entry name" value="TRANSFERRIN"/>
</dbReference>
<dbReference type="SMART" id="SM00094">
    <property type="entry name" value="TR_FER"/>
    <property type="match status" value="1"/>
</dbReference>
<dbReference type="SUPFAM" id="SSF53850">
    <property type="entry name" value="Periplasmic binding protein-like II"/>
    <property type="match status" value="2"/>
</dbReference>
<dbReference type="PROSITE" id="PS00206">
    <property type="entry name" value="TRANSFERRIN_LIKE_2"/>
    <property type="match status" value="1"/>
</dbReference>
<dbReference type="PROSITE" id="PS51408">
    <property type="entry name" value="TRANSFERRIN_LIKE_4"/>
    <property type="match status" value="2"/>
</dbReference>
<protein>
    <recommendedName>
        <fullName>Major yolk protein</fullName>
        <shortName>MYP</shortName>
    </recommendedName>
    <alternativeName>
        <fullName>Vitellogenin</fullName>
    </alternativeName>
</protein>
<comment type="function">
    <text>May serve the following two functions: a classical role as a yolk protein precursor and probably shuttle iron to developing germ cells.</text>
</comment>
<comment type="subcellular location">
    <subcellularLocation>
        <location>Secreted</location>
    </subcellularLocation>
</comment>
<comment type="tissue specificity">
    <text evidence="3">Synthesized in the intestines of the females and males and also in ovaries and testis.</text>
</comment>
<comment type="similarity">
    <text evidence="2">Belongs to the transferrin family.</text>
</comment>
<comment type="sequence caution" evidence="4">
    <conflict type="frameshift">
        <sequence resource="EMBL-CDS" id="CAA68565"/>
    </conflict>
</comment>
<reference key="1">
    <citation type="journal article" date="2002" name="Dev. Biol.">
        <title>The major yolk protein in sea urchins is a transferrin-like, iron binding protein.</title>
        <authorList>
            <person name="Brooks J.M."/>
            <person name="Wessel G.M."/>
        </authorList>
    </citation>
    <scope>NUCLEOTIDE SEQUENCE [MRNA]</scope>
    <scope>IRON-BINDING</scope>
</reference>
<reference key="2">
    <citation type="journal article" date="1987" name="Nucleic Acids Res.">
        <title>A single gene encoding vitellogenin in the sea urchin Strongylocentrotus purpuratus: sequence at the 5' end.</title>
        <authorList>
            <person name="Shyu A.B."/>
            <person name="Blumenthal T."/>
            <person name="Raff R.A."/>
        </authorList>
    </citation>
    <scope>NUCLEOTIDE SEQUENCE [GENOMIC DNA] OF 1-137</scope>
</reference>
<reference key="3">
    <citation type="journal article" date="1986" name="Proc. Natl. Acad. Sci. U.S.A.">
        <title>Expression of the vitellogenin gene in female and male sea urchin.</title>
        <authorList>
            <person name="Shyu A.B."/>
            <person name="Raff R.A."/>
            <person name="Blumenthal T."/>
        </authorList>
    </citation>
    <scope>TISSUE SPECIFICITY</scope>
</reference>
<feature type="signal peptide" evidence="1">
    <location>
        <begin position="1"/>
        <end position="15"/>
    </location>
</feature>
<feature type="chain" id="PRO_0000035750" description="Major yolk protein">
    <location>
        <begin position="16"/>
        <end position="1357"/>
    </location>
</feature>
<feature type="domain" description="Transferrin-like 1" evidence="2">
    <location>
        <begin position="132"/>
        <end position="478"/>
    </location>
</feature>
<feature type="domain" description="Transferrin-like 2" evidence="2">
    <location>
        <begin position="493"/>
        <end position="1101"/>
    </location>
</feature>
<feature type="glycosylation site" description="N-linked (GlcNAc...) asparagine" evidence="1">
    <location>
        <position position="198"/>
    </location>
</feature>
<feature type="glycosylation site" description="N-linked (GlcNAc...) asparagine" evidence="1">
    <location>
        <position position="227"/>
    </location>
</feature>
<feature type="glycosylation site" description="N-linked (GlcNAc...) asparagine" evidence="1">
    <location>
        <position position="304"/>
    </location>
</feature>
<feature type="glycosylation site" description="N-linked (GlcNAc...) asparagine" evidence="1">
    <location>
        <position position="310"/>
    </location>
</feature>
<feature type="glycosylation site" description="N-linked (GlcNAc...) asparagine" evidence="1">
    <location>
        <position position="402"/>
    </location>
</feature>
<feature type="glycosylation site" description="N-linked (GlcNAc...) asparagine" evidence="1">
    <location>
        <position position="499"/>
    </location>
</feature>
<feature type="glycosylation site" description="N-linked (GlcNAc...) asparagine" evidence="1">
    <location>
        <position position="530"/>
    </location>
</feature>
<feature type="glycosylation site" description="N-linked (GlcNAc...) asparagine" evidence="1">
    <location>
        <position position="541"/>
    </location>
</feature>
<feature type="glycosylation site" description="N-linked (GlcNAc...) asparagine" evidence="1">
    <location>
        <position position="572"/>
    </location>
</feature>
<feature type="glycosylation site" description="N-linked (GlcNAc...) asparagine" evidence="1">
    <location>
        <position position="578"/>
    </location>
</feature>
<feature type="glycosylation site" description="N-linked (GlcNAc...) asparagine" evidence="1">
    <location>
        <position position="625"/>
    </location>
</feature>
<feature type="glycosylation site" description="N-linked (GlcNAc...) asparagine" evidence="1">
    <location>
        <position position="639"/>
    </location>
</feature>
<feature type="glycosylation site" description="N-linked (GlcNAc...) asparagine" evidence="1">
    <location>
        <position position="692"/>
    </location>
</feature>
<feature type="glycosylation site" description="N-linked (GlcNAc...) asparagine" evidence="1">
    <location>
        <position position="732"/>
    </location>
</feature>
<feature type="glycosylation site" description="N-linked (GlcNAc...) asparagine" evidence="1">
    <location>
        <position position="741"/>
    </location>
</feature>
<feature type="glycosylation site" description="N-linked (GlcNAc...) asparagine" evidence="1">
    <location>
        <position position="1035"/>
    </location>
</feature>
<feature type="glycosylation site" description="N-linked (GlcNAc...) asparagine" evidence="1">
    <location>
        <position position="1043"/>
    </location>
</feature>
<feature type="glycosylation site" description="N-linked (GlcNAc...) asparagine" evidence="1">
    <location>
        <position position="1081"/>
    </location>
</feature>
<feature type="glycosylation site" description="N-linked (GlcNAc...) asparagine" evidence="1">
    <location>
        <position position="1128"/>
    </location>
</feature>
<feature type="glycosylation site" description="N-linked (GlcNAc...) asparagine" evidence="1">
    <location>
        <position position="1208"/>
    </location>
</feature>
<feature type="glycosylation site" description="N-linked (GlcNAc...) asparagine" evidence="1">
    <location>
        <position position="1241"/>
    </location>
</feature>
<feature type="glycosylation site" description="N-linked (GlcNAc...) asparagine" evidence="1">
    <location>
        <position position="1258"/>
    </location>
</feature>
<feature type="sequence conflict" description="In Ref. 2; CAA68565." evidence="4" ref="2">
    <original>E</original>
    <variation>V</variation>
    <location>
        <position position="85"/>
    </location>
</feature>